<proteinExistence type="evidence at protein level"/>
<name>PPK_CAMFO</name>
<evidence type="ECO:0000250" key="1">
    <source>
        <dbReference type="UniProtKB" id="P82617"/>
    </source>
</evidence>
<evidence type="ECO:0000255" key="2"/>
<evidence type="ECO:0000256" key="3">
    <source>
        <dbReference type="SAM" id="MobiDB-lite"/>
    </source>
</evidence>
<evidence type="ECO:0000269" key="4">
    <source>
    </source>
</evidence>
<evidence type="ECO:0000303" key="5">
    <source>
    </source>
</evidence>
<evidence type="ECO:0000305" key="6"/>
<evidence type="ECO:0000305" key="7">
    <source>
    </source>
</evidence>
<evidence type="ECO:0000312" key="8">
    <source>
        <dbReference type="EMBL" id="EFN67760.1"/>
    </source>
</evidence>
<dbReference type="EMBL" id="GL439118">
    <property type="protein sequence ID" value="EFN67760.1"/>
    <property type="molecule type" value="Genomic_DNA"/>
</dbReference>
<dbReference type="EnsemblMetazoa" id="XM_011258924.3">
    <property type="protein sequence ID" value="XP_011257226.1"/>
    <property type="gene ID" value="LOC105251860"/>
</dbReference>
<dbReference type="KEGG" id="cfo:105251860"/>
<dbReference type="CTD" id="692749"/>
<dbReference type="OMA" id="RQPTQFT"/>
<dbReference type="OrthoDB" id="6424205at2759"/>
<dbReference type="Proteomes" id="UP000000311">
    <property type="component" value="Unassembled WGS sequence"/>
</dbReference>
<dbReference type="GO" id="GO:0005576">
    <property type="term" value="C:extracellular region"/>
    <property type="evidence" value="ECO:0007669"/>
    <property type="project" value="UniProtKB-SubCell"/>
</dbReference>
<dbReference type="GO" id="GO:0007218">
    <property type="term" value="P:neuropeptide signaling pathway"/>
    <property type="evidence" value="ECO:0007669"/>
    <property type="project" value="UniProtKB-KW"/>
</dbReference>
<dbReference type="PROSITE" id="PS00539">
    <property type="entry name" value="PYROKININ"/>
    <property type="match status" value="3"/>
</dbReference>
<comment type="function">
    <text evidence="1">Pyrokinins mediate visceral muscle contractile activity (myotropic activity).</text>
</comment>
<comment type="subcellular location">
    <subcellularLocation>
        <location evidence="7">Secreted</location>
    </subcellularLocation>
</comment>
<comment type="tissue specificity">
    <text evidence="4">Pyrokinins (PK) 1 to 4 are expressed in the retrocerebral complex. PK 1 is expressed in central brain, anntennal lobes and abominal ganglia. PK 2 is expressed in optical lobes and in gnathal, thoracic and abdominal ganglia. PK 3 is expressed in optical lobes and in thoracic and abdominal ganglia (at protein level).</text>
</comment>
<comment type="mass spectrometry" mass="2069.98" method="Electrospray" evidence="4">
    <molecule>Pyrokinin 1</molecule>
    <text>Pyrokinin 1.</text>
</comment>
<comment type="mass spectrometry" mass="1069.57" method="Electrospray" evidence="4">
    <molecule>Pyrokinin 2</molecule>
    <text>Pyrokinin 2.</text>
</comment>
<comment type="mass spectrometry" mass="3275.55" method="Electrospray" evidence="4">
    <molecule>Pyrokinin 3</molecule>
    <text>Pyrokinin 3.</text>
</comment>
<comment type="mass spectrometry" mass="1065.64" method="Electrospray" evidence="4">
    <molecule>Pyrokinin 4</molecule>
    <text>Pyrokinin 4.</text>
</comment>
<comment type="miscellaneous">
    <text evidence="5">The structural similarity of PK1 and PK2 to CAPA-PK might compensate for the apparent absence of CAPA-PK in ants.</text>
</comment>
<comment type="similarity">
    <text evidence="6">Belongs to the pyrokinin family.</text>
</comment>
<organism>
    <name type="scientific">Camponotus floridanus</name>
    <name type="common">Florida carpenter ant</name>
    <dbReference type="NCBI Taxonomy" id="104421"/>
    <lineage>
        <taxon>Eukaryota</taxon>
        <taxon>Metazoa</taxon>
        <taxon>Ecdysozoa</taxon>
        <taxon>Arthropoda</taxon>
        <taxon>Hexapoda</taxon>
        <taxon>Insecta</taxon>
        <taxon>Pterygota</taxon>
        <taxon>Neoptera</taxon>
        <taxon>Endopterygota</taxon>
        <taxon>Hymenoptera</taxon>
        <taxon>Apocrita</taxon>
        <taxon>Aculeata</taxon>
        <taxon>Formicoidea</taxon>
        <taxon>Formicidae</taxon>
        <taxon>Formicinae</taxon>
        <taxon>Camponotus</taxon>
    </lineage>
</organism>
<reference key="1">
    <citation type="journal article" date="2010" name="Science">
        <title>Genomic comparison of the ants Camponotus floridanus and Harpegnathos saltator.</title>
        <authorList>
            <person name="Bonasio R."/>
            <person name="Zhang G."/>
            <person name="Ye C."/>
            <person name="Mutti N.S."/>
            <person name="Fang X."/>
            <person name="Qin N."/>
            <person name="Donahue G."/>
            <person name="Yang P."/>
            <person name="Li Q."/>
            <person name="Li C."/>
            <person name="Zhang P."/>
            <person name="Huang Z."/>
            <person name="Berger S.L."/>
            <person name="Reinberg D."/>
            <person name="Wang J."/>
            <person name="Liebig J."/>
        </authorList>
    </citation>
    <scope>NUCLEOTIDE SEQUENCE [LARGE SCALE GENOMIC DNA]</scope>
</reference>
<reference evidence="6" key="2">
    <citation type="journal article" date="2015" name="J. Proteome Res.">
        <title>Neuropeptidomics of the carpenter ant Camponotus floridanus.</title>
        <authorList>
            <person name="Schmitt F."/>
            <person name="Vanselow J.T."/>
            <person name="Schlosser A."/>
            <person name="Kahnt J."/>
            <person name="Roessler W."/>
            <person name="Wegener C."/>
        </authorList>
    </citation>
    <scope>PROTEIN SEQUENCE OF 56-74; 116-124; 127-154 AND 158-166</scope>
    <scope>TISSUE SPECIFICITY</scope>
    <scope>MASS SPECTROMETRY</scope>
    <scope>IDENTIFICATION BY MASS SPECTROMETRY</scope>
    <scope>AMIDATION AT LEU-74; LEU-124; LEU-154 AND LEU-166</scope>
</reference>
<sequence length="177" mass="19760">MIVTGNPVCAIALLLCLVFRASGEYELEMSSGGSNDGRSPSNDFGSCTDGKCTKRTTTTQESGISSGMWFGPRLGKRHKSNEKQQINPEIEMLVNALDQPGMRWTVITIPANEKRQPTQFTPRLGRGSEEKFIYSDATDRNEIDEDDPLFTPRLGRRVPWIPSPRLGRQSRSVSRKI</sequence>
<accession>E2AFK9</accession>
<protein>
    <recommendedName>
        <fullName evidence="8">PBAN-type neuropeptides</fullName>
    </recommendedName>
    <component>
        <recommendedName>
            <fullName evidence="5">Pyrokinin 1</fullName>
            <shortName evidence="5">Pk 1</shortName>
        </recommendedName>
    </component>
    <component>
        <recommendedName>
            <fullName evidence="5">Pyrokinin 2</fullName>
            <shortName evidence="5">Pk 2</shortName>
        </recommendedName>
    </component>
    <component>
        <recommendedName>
            <fullName evidence="5">Pyrokinin 3</fullName>
            <shortName evidence="5">Pk 3</shortName>
        </recommendedName>
    </component>
    <component>
        <recommendedName>
            <fullName evidence="5">Pyrokinin 4</fullName>
            <shortName evidence="5">Pk 4</shortName>
        </recommendedName>
    </component>
</protein>
<gene>
    <name evidence="8" type="ORF">EAG_02707</name>
</gene>
<feature type="signal peptide" evidence="2">
    <location>
        <begin position="1"/>
        <end position="23"/>
    </location>
</feature>
<feature type="propeptide" id="PRO_0000434243" evidence="7">
    <location>
        <begin position="24"/>
        <end position="54"/>
    </location>
</feature>
<feature type="peptide" id="PRO_0000434244" description="Pyrokinin 1" evidence="4">
    <location>
        <begin position="56"/>
        <end position="74"/>
    </location>
</feature>
<feature type="propeptide" id="PRO_0000434245" evidence="7">
    <location>
        <begin position="78"/>
        <end position="113"/>
    </location>
</feature>
<feature type="peptide" id="PRO_0000434246" description="Pyrokinin 2" evidence="4">
    <location>
        <begin position="116"/>
        <end position="124"/>
    </location>
</feature>
<feature type="peptide" id="PRO_0000434247" description="Pyrokinin 3" evidence="4">
    <location>
        <begin position="127"/>
        <end position="154"/>
    </location>
</feature>
<feature type="peptide" id="PRO_0000434248" description="Pyrokinin 4" evidence="4">
    <location>
        <begin position="158"/>
        <end position="166"/>
    </location>
</feature>
<feature type="propeptide" id="PRO_0000434249" evidence="7">
    <location>
        <begin position="169"/>
        <end position="177"/>
    </location>
</feature>
<feature type="region of interest" description="Disordered" evidence="3">
    <location>
        <begin position="28"/>
        <end position="73"/>
    </location>
</feature>
<feature type="compositionally biased region" description="Polar residues" evidence="3">
    <location>
        <begin position="31"/>
        <end position="45"/>
    </location>
</feature>
<feature type="compositionally biased region" description="Low complexity" evidence="3">
    <location>
        <begin position="47"/>
        <end position="59"/>
    </location>
</feature>
<feature type="modified residue" description="Leucine amide" evidence="4">
    <location>
        <position position="74"/>
    </location>
</feature>
<feature type="modified residue" description="Leucine amide" evidence="4">
    <location>
        <position position="124"/>
    </location>
</feature>
<feature type="modified residue" description="Leucine amide" evidence="4">
    <location>
        <position position="154"/>
    </location>
</feature>
<feature type="modified residue" description="Leucine amide" evidence="4">
    <location>
        <position position="166"/>
    </location>
</feature>
<keyword id="KW-0027">Amidation</keyword>
<keyword id="KW-0165">Cleavage on pair of basic residues</keyword>
<keyword id="KW-0903">Direct protein sequencing</keyword>
<keyword id="KW-0527">Neuropeptide</keyword>
<keyword id="KW-1185">Reference proteome</keyword>
<keyword id="KW-0964">Secreted</keyword>
<keyword id="KW-0732">Signal</keyword>